<gene>
    <name evidence="1" type="primary">pepA</name>
    <name type="ordered locus">TDE_0300</name>
</gene>
<proteinExistence type="inferred from homology"/>
<feature type="chain" id="PRO_0000165806" description="Probable cytosol aminopeptidase">
    <location>
        <begin position="1"/>
        <end position="476"/>
    </location>
</feature>
<feature type="active site" evidence="1">
    <location>
        <position position="254"/>
    </location>
</feature>
<feature type="active site" evidence="1">
    <location>
        <position position="328"/>
    </location>
</feature>
<feature type="binding site" evidence="1">
    <location>
        <position position="242"/>
    </location>
    <ligand>
        <name>Mn(2+)</name>
        <dbReference type="ChEBI" id="CHEBI:29035"/>
        <label>2</label>
    </ligand>
</feature>
<feature type="binding site" evidence="1">
    <location>
        <position position="247"/>
    </location>
    <ligand>
        <name>Mn(2+)</name>
        <dbReference type="ChEBI" id="CHEBI:29035"/>
        <label>1</label>
    </ligand>
</feature>
<feature type="binding site" evidence="1">
    <location>
        <position position="247"/>
    </location>
    <ligand>
        <name>Mn(2+)</name>
        <dbReference type="ChEBI" id="CHEBI:29035"/>
        <label>2</label>
    </ligand>
</feature>
<feature type="binding site" evidence="1">
    <location>
        <position position="265"/>
    </location>
    <ligand>
        <name>Mn(2+)</name>
        <dbReference type="ChEBI" id="CHEBI:29035"/>
        <label>2</label>
    </ligand>
</feature>
<feature type="binding site" evidence="1">
    <location>
        <position position="324"/>
    </location>
    <ligand>
        <name>Mn(2+)</name>
        <dbReference type="ChEBI" id="CHEBI:29035"/>
        <label>1</label>
    </ligand>
</feature>
<feature type="binding site" evidence="1">
    <location>
        <position position="326"/>
    </location>
    <ligand>
        <name>Mn(2+)</name>
        <dbReference type="ChEBI" id="CHEBI:29035"/>
        <label>1</label>
    </ligand>
</feature>
<feature type="binding site" evidence="1">
    <location>
        <position position="326"/>
    </location>
    <ligand>
        <name>Mn(2+)</name>
        <dbReference type="ChEBI" id="CHEBI:29035"/>
        <label>2</label>
    </ligand>
</feature>
<accession>Q73QZ3</accession>
<organism>
    <name type="scientific">Treponema denticola (strain ATCC 35405 / DSM 14222 / CIP 103919 / JCM 8153 / KCTC 15104)</name>
    <dbReference type="NCBI Taxonomy" id="243275"/>
    <lineage>
        <taxon>Bacteria</taxon>
        <taxon>Pseudomonadati</taxon>
        <taxon>Spirochaetota</taxon>
        <taxon>Spirochaetia</taxon>
        <taxon>Spirochaetales</taxon>
        <taxon>Treponemataceae</taxon>
        <taxon>Treponema</taxon>
    </lineage>
</organism>
<keyword id="KW-0031">Aminopeptidase</keyword>
<keyword id="KW-0963">Cytoplasm</keyword>
<keyword id="KW-0378">Hydrolase</keyword>
<keyword id="KW-0464">Manganese</keyword>
<keyword id="KW-0479">Metal-binding</keyword>
<keyword id="KW-0645">Protease</keyword>
<keyword id="KW-1185">Reference proteome</keyword>
<protein>
    <recommendedName>
        <fullName evidence="1">Probable cytosol aminopeptidase</fullName>
        <ecNumber evidence="1">3.4.11.1</ecNumber>
    </recommendedName>
    <alternativeName>
        <fullName evidence="1">Leucine aminopeptidase</fullName>
        <shortName evidence="1">LAP</shortName>
        <ecNumber evidence="1">3.4.11.10</ecNumber>
    </alternativeName>
    <alternativeName>
        <fullName evidence="1">Leucyl aminopeptidase</fullName>
    </alternativeName>
</protein>
<reference key="1">
    <citation type="journal article" date="2004" name="Proc. Natl. Acad. Sci. U.S.A.">
        <title>Comparison of the genome of the oral pathogen Treponema denticola with other spirochete genomes.</title>
        <authorList>
            <person name="Seshadri R."/>
            <person name="Myers G.S.A."/>
            <person name="Tettelin H."/>
            <person name="Eisen J.A."/>
            <person name="Heidelberg J.F."/>
            <person name="Dodson R.J."/>
            <person name="Davidsen T.M."/>
            <person name="DeBoy R.T."/>
            <person name="Fouts D.E."/>
            <person name="Haft D.H."/>
            <person name="Selengut J."/>
            <person name="Ren Q."/>
            <person name="Brinkac L.M."/>
            <person name="Madupu R."/>
            <person name="Kolonay J.F."/>
            <person name="Durkin S.A."/>
            <person name="Daugherty S.C."/>
            <person name="Shetty J."/>
            <person name="Shvartsbeyn A."/>
            <person name="Gebregeorgis E."/>
            <person name="Geer K."/>
            <person name="Tsegaye G."/>
            <person name="Malek J.A."/>
            <person name="Ayodeji B."/>
            <person name="Shatsman S."/>
            <person name="McLeod M.P."/>
            <person name="Smajs D."/>
            <person name="Howell J.K."/>
            <person name="Pal S."/>
            <person name="Amin A."/>
            <person name="Vashisth P."/>
            <person name="McNeill T.Z."/>
            <person name="Xiang Q."/>
            <person name="Sodergren E."/>
            <person name="Baca E."/>
            <person name="Weinstock G.M."/>
            <person name="Norris S.J."/>
            <person name="Fraser C.M."/>
            <person name="Paulsen I.T."/>
        </authorList>
    </citation>
    <scope>NUCLEOTIDE SEQUENCE [LARGE SCALE GENOMIC DNA]</scope>
    <source>
        <strain>ATCC 35405 / DSM 14222 / CIP 103919 / JCM 8153 / KCTC 15104</strain>
    </source>
</reference>
<sequence length="476" mass="52167">MKFNIAKKGGVVAQLVFEEKIEGGYLNHLKEKELFSGKAEDVYYTLDSNLKAQLFIGLGKEEKIDLEVLRKTFFKAASELLKNKVEEVELNIPKLNNLCNYKTAEAIAEGMLHATYKYDKFKSDRKEQTEITVNYNPEKGKEDRAEKGINEAVKLMEAVFLTRDLVNQPANVIYPETLAKIAKEKLEAKGVKVTVHGKKEIEALKMEAFLNVARASTKEPKLIVMEYYNNPGSNEKIALVGKGLTYDSGGYAIKPATSMVDMFTDMGGSGTVIGAMHALADLKAKVNVVAVVASCENMISGDGYRNGDIIGSMSGKTIEIINTDAEGRLTLADAVYYATNNLGATKLIDLATLTGACVSALGEQVSGAVTNNDEFFSELVKANERAGEIVWRMPTIEYYKKMNESKVADLKNSGGKLGGMMTAGLFVGSFLAKEDIPWIHIDIAGTAYITEKFGYLKENATGTLVKSLYYMLSKEA</sequence>
<evidence type="ECO:0000255" key="1">
    <source>
        <dbReference type="HAMAP-Rule" id="MF_00181"/>
    </source>
</evidence>
<comment type="function">
    <text evidence="1">Presumably involved in the processing and regular turnover of intracellular proteins. Catalyzes the removal of unsubstituted N-terminal amino acids from various peptides.</text>
</comment>
<comment type="catalytic activity">
    <reaction evidence="1">
        <text>Release of an N-terminal amino acid, Xaa-|-Yaa-, in which Xaa is preferably Leu, but may be other amino acids including Pro although not Arg or Lys, and Yaa may be Pro. Amino acid amides and methyl esters are also readily hydrolyzed, but rates on arylamides are exceedingly low.</text>
        <dbReference type="EC" id="3.4.11.1"/>
    </reaction>
</comment>
<comment type="catalytic activity">
    <reaction evidence="1">
        <text>Release of an N-terminal amino acid, preferentially leucine, but not glutamic or aspartic acids.</text>
        <dbReference type="EC" id="3.4.11.10"/>
    </reaction>
</comment>
<comment type="cofactor">
    <cofactor evidence="1">
        <name>Mn(2+)</name>
        <dbReference type="ChEBI" id="CHEBI:29035"/>
    </cofactor>
    <text evidence="1">Binds 2 manganese ions per subunit.</text>
</comment>
<comment type="subcellular location">
    <subcellularLocation>
        <location evidence="1">Cytoplasm</location>
    </subcellularLocation>
</comment>
<comment type="similarity">
    <text evidence="1">Belongs to the peptidase M17 family.</text>
</comment>
<name>AMPA_TREDE</name>
<dbReference type="EC" id="3.4.11.1" evidence="1"/>
<dbReference type="EC" id="3.4.11.10" evidence="1"/>
<dbReference type="EMBL" id="AE017226">
    <property type="protein sequence ID" value="AAS10795.1"/>
    <property type="molecule type" value="Genomic_DNA"/>
</dbReference>
<dbReference type="RefSeq" id="NP_970914.1">
    <property type="nucleotide sequence ID" value="NC_002967.9"/>
</dbReference>
<dbReference type="RefSeq" id="WP_002681245.1">
    <property type="nucleotide sequence ID" value="NC_002967.9"/>
</dbReference>
<dbReference type="SMR" id="Q73QZ3"/>
<dbReference type="STRING" id="243275.TDE_0300"/>
<dbReference type="MEROPS" id="M17.013"/>
<dbReference type="PaxDb" id="243275-TDE_0300"/>
<dbReference type="GeneID" id="2740287"/>
<dbReference type="KEGG" id="tde:TDE_0300"/>
<dbReference type="PATRIC" id="fig|243275.7.peg.288"/>
<dbReference type="eggNOG" id="COG0260">
    <property type="taxonomic scope" value="Bacteria"/>
</dbReference>
<dbReference type="HOGENOM" id="CLU_013734_2_2_12"/>
<dbReference type="OrthoDB" id="9809354at2"/>
<dbReference type="Proteomes" id="UP000008212">
    <property type="component" value="Chromosome"/>
</dbReference>
<dbReference type="GO" id="GO:0005737">
    <property type="term" value="C:cytoplasm"/>
    <property type="evidence" value="ECO:0007669"/>
    <property type="project" value="UniProtKB-SubCell"/>
</dbReference>
<dbReference type="GO" id="GO:0030145">
    <property type="term" value="F:manganese ion binding"/>
    <property type="evidence" value="ECO:0007669"/>
    <property type="project" value="UniProtKB-UniRule"/>
</dbReference>
<dbReference type="GO" id="GO:0070006">
    <property type="term" value="F:metalloaminopeptidase activity"/>
    <property type="evidence" value="ECO:0007669"/>
    <property type="project" value="InterPro"/>
</dbReference>
<dbReference type="GO" id="GO:0006508">
    <property type="term" value="P:proteolysis"/>
    <property type="evidence" value="ECO:0007669"/>
    <property type="project" value="UniProtKB-KW"/>
</dbReference>
<dbReference type="CDD" id="cd00433">
    <property type="entry name" value="Peptidase_M17"/>
    <property type="match status" value="1"/>
</dbReference>
<dbReference type="Gene3D" id="3.40.220.10">
    <property type="entry name" value="Leucine Aminopeptidase, subunit E, domain 1"/>
    <property type="match status" value="1"/>
</dbReference>
<dbReference type="Gene3D" id="3.40.630.10">
    <property type="entry name" value="Zn peptidases"/>
    <property type="match status" value="1"/>
</dbReference>
<dbReference type="HAMAP" id="MF_00181">
    <property type="entry name" value="Cytosol_peptidase_M17"/>
    <property type="match status" value="1"/>
</dbReference>
<dbReference type="InterPro" id="IPR011356">
    <property type="entry name" value="Leucine_aapep/pepB"/>
</dbReference>
<dbReference type="InterPro" id="IPR043472">
    <property type="entry name" value="Macro_dom-like"/>
</dbReference>
<dbReference type="InterPro" id="IPR000819">
    <property type="entry name" value="Peptidase_M17_C"/>
</dbReference>
<dbReference type="InterPro" id="IPR023042">
    <property type="entry name" value="Peptidase_M17_leu_NH2_pept"/>
</dbReference>
<dbReference type="InterPro" id="IPR008283">
    <property type="entry name" value="Peptidase_M17_N"/>
</dbReference>
<dbReference type="NCBIfam" id="NF002073">
    <property type="entry name" value="PRK00913.1-2"/>
    <property type="match status" value="1"/>
</dbReference>
<dbReference type="NCBIfam" id="NF002083">
    <property type="entry name" value="PRK00913.3-5"/>
    <property type="match status" value="1"/>
</dbReference>
<dbReference type="PANTHER" id="PTHR11963:SF23">
    <property type="entry name" value="CYTOSOL AMINOPEPTIDASE"/>
    <property type="match status" value="1"/>
</dbReference>
<dbReference type="PANTHER" id="PTHR11963">
    <property type="entry name" value="LEUCINE AMINOPEPTIDASE-RELATED"/>
    <property type="match status" value="1"/>
</dbReference>
<dbReference type="Pfam" id="PF00883">
    <property type="entry name" value="Peptidase_M17"/>
    <property type="match status" value="1"/>
</dbReference>
<dbReference type="Pfam" id="PF02789">
    <property type="entry name" value="Peptidase_M17_N"/>
    <property type="match status" value="1"/>
</dbReference>
<dbReference type="PRINTS" id="PR00481">
    <property type="entry name" value="LAMNOPPTDASE"/>
</dbReference>
<dbReference type="SUPFAM" id="SSF52949">
    <property type="entry name" value="Macro domain-like"/>
    <property type="match status" value="1"/>
</dbReference>
<dbReference type="SUPFAM" id="SSF53187">
    <property type="entry name" value="Zn-dependent exopeptidases"/>
    <property type="match status" value="1"/>
</dbReference>
<dbReference type="PROSITE" id="PS00631">
    <property type="entry name" value="CYTOSOL_AP"/>
    <property type="match status" value="1"/>
</dbReference>